<proteinExistence type="evidence at protein level"/>
<protein>
    <recommendedName>
        <fullName evidence="3">Large ribosomal subunit protein bL36</fullName>
    </recommendedName>
    <alternativeName>
        <fullName>50S ribosomal protein L36</fullName>
    </alternativeName>
    <alternativeName>
        <fullName>Ribosomal protein B</fullName>
    </alternativeName>
</protein>
<name>RL36_THET8</name>
<sequence>MKVRASVKRICDKCKVIRRHGRVYVICENPKHKQRQG</sequence>
<dbReference type="EMBL" id="AB024328">
    <property type="protein sequence ID" value="BAA75545.1"/>
    <property type="molecule type" value="Genomic_DNA"/>
</dbReference>
<dbReference type="EMBL" id="AP008226">
    <property type="protein sequence ID" value="BAD71491.1"/>
    <property type="molecule type" value="Genomic_DNA"/>
</dbReference>
<dbReference type="RefSeq" id="WP_008633370.1">
    <property type="nucleotide sequence ID" value="NC_006461.1"/>
</dbReference>
<dbReference type="RefSeq" id="YP_144934.1">
    <property type="nucleotide sequence ID" value="NC_006461.1"/>
</dbReference>
<dbReference type="PDB" id="1VY4">
    <property type="method" value="X-ray"/>
    <property type="resolution" value="2.60 A"/>
    <property type="chains" value="B9/D9=1-37"/>
</dbReference>
<dbReference type="PDB" id="1VY5">
    <property type="method" value="X-ray"/>
    <property type="resolution" value="2.55 A"/>
    <property type="chains" value="B9/D9=1-37"/>
</dbReference>
<dbReference type="PDB" id="1VY6">
    <property type="method" value="X-ray"/>
    <property type="resolution" value="2.90 A"/>
    <property type="chains" value="B9/D9=1-37"/>
</dbReference>
<dbReference type="PDB" id="1VY7">
    <property type="method" value="X-ray"/>
    <property type="resolution" value="2.80 A"/>
    <property type="chains" value="B9/D9=1-37"/>
</dbReference>
<dbReference type="PDB" id="4P6F">
    <property type="method" value="X-ray"/>
    <property type="resolution" value="3.60 A"/>
    <property type="chains" value="R9/Y9=1-37"/>
</dbReference>
<dbReference type="PDB" id="4P70">
    <property type="method" value="X-ray"/>
    <property type="resolution" value="3.68 A"/>
    <property type="chains" value="R9/Y9=1-37"/>
</dbReference>
<dbReference type="PDB" id="4TUA">
    <property type="method" value="X-ray"/>
    <property type="resolution" value="3.60 A"/>
    <property type="chains" value="R9/Y9=1-37"/>
</dbReference>
<dbReference type="PDB" id="4TUB">
    <property type="method" value="X-ray"/>
    <property type="resolution" value="3.60 A"/>
    <property type="chains" value="R9/Y9=1-37"/>
</dbReference>
<dbReference type="PDB" id="4TUC">
    <property type="method" value="X-ray"/>
    <property type="resolution" value="3.60 A"/>
    <property type="chains" value="R9/Y9=1-37"/>
</dbReference>
<dbReference type="PDB" id="4TUD">
    <property type="method" value="X-ray"/>
    <property type="resolution" value="3.60 A"/>
    <property type="chains" value="R9/Y9=1-37"/>
</dbReference>
<dbReference type="PDB" id="4TUE">
    <property type="method" value="X-ray"/>
    <property type="resolution" value="3.50 A"/>
    <property type="chains" value="R9/Y9=1-37"/>
</dbReference>
<dbReference type="PDB" id="4V4P">
    <property type="method" value="X-ray"/>
    <property type="resolution" value="5.50 A"/>
    <property type="chains" value="9=11-36"/>
</dbReference>
<dbReference type="PDB" id="4V4X">
    <property type="method" value="X-ray"/>
    <property type="resolution" value="5.00 A"/>
    <property type="chains" value="B8=1-37"/>
</dbReference>
<dbReference type="PDB" id="4V4Y">
    <property type="method" value="X-ray"/>
    <property type="resolution" value="5.50 A"/>
    <property type="chains" value="B8=1-37"/>
</dbReference>
<dbReference type="PDB" id="4V4Z">
    <property type="method" value="X-ray"/>
    <property type="resolution" value="4.51 A"/>
    <property type="chains" value="B8=1-37"/>
</dbReference>
<dbReference type="PDB" id="4V51">
    <property type="method" value="X-ray"/>
    <property type="resolution" value="2.80 A"/>
    <property type="chains" value="9=1-37"/>
</dbReference>
<dbReference type="PDB" id="4V5C">
    <property type="method" value="X-ray"/>
    <property type="resolution" value="3.30 A"/>
    <property type="chains" value="B9/D9=1-37"/>
</dbReference>
<dbReference type="PDB" id="4V5D">
    <property type="method" value="X-ray"/>
    <property type="resolution" value="3.50 A"/>
    <property type="chains" value="B9/D9=1-37"/>
</dbReference>
<dbReference type="PDB" id="4V5E">
    <property type="method" value="X-ray"/>
    <property type="resolution" value="3.45 A"/>
    <property type="chains" value="B9/D9=1-37"/>
</dbReference>
<dbReference type="PDB" id="4V5F">
    <property type="method" value="X-ray"/>
    <property type="resolution" value="3.60 A"/>
    <property type="chains" value="B9/D9=1-37"/>
</dbReference>
<dbReference type="PDB" id="4V5G">
    <property type="method" value="X-ray"/>
    <property type="resolution" value="3.60 A"/>
    <property type="chains" value="B9/D9=1-37"/>
</dbReference>
<dbReference type="PDB" id="4V5J">
    <property type="method" value="X-ray"/>
    <property type="resolution" value="3.10 A"/>
    <property type="chains" value="B9/D9=1-37"/>
</dbReference>
<dbReference type="PDB" id="4V5K">
    <property type="method" value="X-ray"/>
    <property type="resolution" value="3.20 A"/>
    <property type="chains" value="B9/D9=1-37"/>
</dbReference>
<dbReference type="PDB" id="4V5L">
    <property type="method" value="X-ray"/>
    <property type="resolution" value="3.10 A"/>
    <property type="chains" value="B9=1-37"/>
</dbReference>
<dbReference type="PDB" id="4V5M">
    <property type="method" value="EM"/>
    <property type="resolution" value="7.80 A"/>
    <property type="chains" value="B9=1-37"/>
</dbReference>
<dbReference type="PDB" id="4V5N">
    <property type="method" value="EM"/>
    <property type="resolution" value="7.60 A"/>
    <property type="chains" value="B9=1-37"/>
</dbReference>
<dbReference type="PDB" id="4V5P">
    <property type="method" value="X-ray"/>
    <property type="resolution" value="3.10 A"/>
    <property type="chains" value="B9/D9=1-37"/>
</dbReference>
<dbReference type="PDB" id="4V5Q">
    <property type="method" value="X-ray"/>
    <property type="resolution" value="3.10 A"/>
    <property type="chains" value="B9/D9=1-37"/>
</dbReference>
<dbReference type="PDB" id="4V5R">
    <property type="method" value="X-ray"/>
    <property type="resolution" value="3.10 A"/>
    <property type="chains" value="B9/D9=1-37"/>
</dbReference>
<dbReference type="PDB" id="4V5S">
    <property type="method" value="X-ray"/>
    <property type="resolution" value="3.10 A"/>
    <property type="chains" value="B9/D9=1-37"/>
</dbReference>
<dbReference type="PDB" id="4V68">
    <property type="method" value="EM"/>
    <property type="resolution" value="6.40 A"/>
    <property type="chains" value="B9=2-36"/>
</dbReference>
<dbReference type="PDB" id="4V6A">
    <property type="method" value="X-ray"/>
    <property type="resolution" value="3.10 A"/>
    <property type="chains" value="B9/D9=1-37"/>
</dbReference>
<dbReference type="PDB" id="4V7J">
    <property type="method" value="X-ray"/>
    <property type="resolution" value="3.30 A"/>
    <property type="chains" value="A9/B9=1-37"/>
</dbReference>
<dbReference type="PDB" id="4V7K">
    <property type="method" value="X-ray"/>
    <property type="resolution" value="3.60 A"/>
    <property type="chains" value="A9/B9=1-37"/>
</dbReference>
<dbReference type="PDB" id="4V7L">
    <property type="method" value="X-ray"/>
    <property type="resolution" value="3.00 A"/>
    <property type="chains" value="B9/D9=1-37"/>
</dbReference>
<dbReference type="PDB" id="4V7M">
    <property type="method" value="X-ray"/>
    <property type="resolution" value="3.45 A"/>
    <property type="chains" value="B9/D9=1-37"/>
</dbReference>
<dbReference type="PDB" id="4V8G">
    <property type="method" value="X-ray"/>
    <property type="resolution" value="3.00 A"/>
    <property type="chains" value="B9/D9=1-37"/>
</dbReference>
<dbReference type="PDB" id="4V8H">
    <property type="method" value="X-ray"/>
    <property type="resolution" value="3.10 A"/>
    <property type="chains" value="B9/D9=1-37"/>
</dbReference>
<dbReference type="PDB" id="4V8I">
    <property type="method" value="X-ray"/>
    <property type="resolution" value="2.70 A"/>
    <property type="chains" value="B9/D9=1-37"/>
</dbReference>
<dbReference type="PDB" id="4V8J">
    <property type="method" value="X-ray"/>
    <property type="resolution" value="3.90 A"/>
    <property type="chains" value="B9/D9=1-37"/>
</dbReference>
<dbReference type="PDB" id="4V8N">
    <property type="method" value="X-ray"/>
    <property type="resolution" value="3.10 A"/>
    <property type="chains" value="B9/D9=1-37"/>
</dbReference>
<dbReference type="PDB" id="4V8O">
    <property type="method" value="X-ray"/>
    <property type="resolution" value="3.80 A"/>
    <property type="chains" value="B9=1-37"/>
</dbReference>
<dbReference type="PDB" id="4V8Q">
    <property type="method" value="X-ray"/>
    <property type="resolution" value="3.10 A"/>
    <property type="chains" value="A9=1-37"/>
</dbReference>
<dbReference type="PDB" id="4V8U">
    <property type="method" value="X-ray"/>
    <property type="resolution" value="3.70 A"/>
    <property type="chains" value="B9/D9=1-37"/>
</dbReference>
<dbReference type="PDB" id="4V8X">
    <property type="method" value="X-ray"/>
    <property type="resolution" value="3.35 A"/>
    <property type="chains" value="B9/D9=1-37"/>
</dbReference>
<dbReference type="PDB" id="4V90">
    <property type="method" value="X-ray"/>
    <property type="resolution" value="2.95 A"/>
    <property type="chains" value="B9=1-37"/>
</dbReference>
<dbReference type="PDB" id="4V95">
    <property type="method" value="X-ray"/>
    <property type="resolution" value="3.20 A"/>
    <property type="chains" value="B9/D9=1-37"/>
</dbReference>
<dbReference type="PDB" id="4V97">
    <property type="method" value="X-ray"/>
    <property type="resolution" value="3.52 A"/>
    <property type="chains" value="B9/D9=1-37"/>
</dbReference>
<dbReference type="PDB" id="4V9H">
    <property type="method" value="X-ray"/>
    <property type="resolution" value="2.86 A"/>
    <property type="chains" value="B9=1-37"/>
</dbReference>
<dbReference type="PDB" id="4V9I">
    <property type="method" value="X-ray"/>
    <property type="resolution" value="3.30 A"/>
    <property type="chains" value="B9/D9=2-37"/>
</dbReference>
<dbReference type="PDB" id="4V9R">
    <property type="method" value="X-ray"/>
    <property type="resolution" value="3.00 A"/>
    <property type="chains" value="B9/D9=1-37"/>
</dbReference>
<dbReference type="PDB" id="4V9S">
    <property type="method" value="X-ray"/>
    <property type="resolution" value="3.10 A"/>
    <property type="chains" value="B9/D9=1-37"/>
</dbReference>
<dbReference type="PDB" id="4W2E">
    <property type="method" value="X-ray"/>
    <property type="resolution" value="2.90 A"/>
    <property type="chains" value="9=1-37"/>
</dbReference>
<dbReference type="PDB" id="4W2F">
    <property type="method" value="X-ray"/>
    <property type="resolution" value="2.40 A"/>
    <property type="chains" value="B9/D9=1-37"/>
</dbReference>
<dbReference type="PDB" id="4W2G">
    <property type="method" value="X-ray"/>
    <property type="resolution" value="2.55 A"/>
    <property type="chains" value="B9/D9=1-37"/>
</dbReference>
<dbReference type="PDB" id="4W2H">
    <property type="method" value="X-ray"/>
    <property type="resolution" value="2.70 A"/>
    <property type="chains" value="B9/D9=1-37"/>
</dbReference>
<dbReference type="PDB" id="4W2I">
    <property type="method" value="X-ray"/>
    <property type="resolution" value="2.70 A"/>
    <property type="chains" value="B9/D9=1-37"/>
</dbReference>
<dbReference type="PDB" id="4W4G">
    <property type="method" value="X-ray"/>
    <property type="resolution" value="3.30 A"/>
    <property type="chains" value="R9/Y9=1-37"/>
</dbReference>
<dbReference type="PDB" id="4WPO">
    <property type="method" value="X-ray"/>
    <property type="resolution" value="2.80 A"/>
    <property type="chains" value="A9/C9=1-37"/>
</dbReference>
<dbReference type="PDB" id="4WQF">
    <property type="method" value="X-ray"/>
    <property type="resolution" value="2.80 A"/>
    <property type="chains" value="A9/C9=1-37"/>
</dbReference>
<dbReference type="PDB" id="4WQU">
    <property type="method" value="X-ray"/>
    <property type="resolution" value="2.80 A"/>
    <property type="chains" value="A9/C9=1-37"/>
</dbReference>
<dbReference type="PDB" id="4WQY">
    <property type="method" value="X-ray"/>
    <property type="resolution" value="2.80 A"/>
    <property type="chains" value="A9/C9=1-37"/>
</dbReference>
<dbReference type="PDB" id="4WT8">
    <property type="method" value="X-ray"/>
    <property type="resolution" value="3.40 A"/>
    <property type="chains" value="C0/D0=2-37"/>
</dbReference>
<dbReference type="PDB" id="4Y4O">
    <property type="method" value="X-ray"/>
    <property type="resolution" value="2.30 A"/>
    <property type="chains" value="19/29=1-37"/>
</dbReference>
<dbReference type="PDB" id="4Y4P">
    <property type="method" value="X-ray"/>
    <property type="resolution" value="2.50 A"/>
    <property type="chains" value="19/29=1-37"/>
</dbReference>
<dbReference type="PDB" id="4YPB">
    <property type="method" value="X-ray"/>
    <property type="resolution" value="3.40 A"/>
    <property type="chains" value="R9/Y9=1-37"/>
</dbReference>
<dbReference type="PDB" id="4YZV">
    <property type="method" value="X-ray"/>
    <property type="resolution" value="3.10 A"/>
    <property type="chains" value="R9/Y9=1-37"/>
</dbReference>
<dbReference type="PDB" id="4Z3S">
    <property type="method" value="X-ray"/>
    <property type="resolution" value="2.65 A"/>
    <property type="chains" value="19/29=1-37"/>
</dbReference>
<dbReference type="PDB" id="4Z8C">
    <property type="method" value="X-ray"/>
    <property type="resolution" value="2.90 A"/>
    <property type="chains" value="19/29=1-37"/>
</dbReference>
<dbReference type="PDB" id="4ZER">
    <property type="method" value="X-ray"/>
    <property type="resolution" value="3.10 A"/>
    <property type="chains" value="19/29=1-37"/>
</dbReference>
<dbReference type="PDB" id="4ZSN">
    <property type="method" value="X-ray"/>
    <property type="resolution" value="3.60 A"/>
    <property type="chains" value="R9/Y9=1-37"/>
</dbReference>
<dbReference type="PDB" id="5A9Z">
    <property type="method" value="EM"/>
    <property type="resolution" value="4.70 A"/>
    <property type="chains" value="Af=1-37"/>
</dbReference>
<dbReference type="PDB" id="5AA0">
    <property type="method" value="EM"/>
    <property type="resolution" value="5.00 A"/>
    <property type="chains" value="Af=1-37"/>
</dbReference>
<dbReference type="PDB" id="5CZP">
    <property type="method" value="X-ray"/>
    <property type="resolution" value="3.30 A"/>
    <property type="chains" value="R9/Y9=1-37"/>
</dbReference>
<dbReference type="PDB" id="5DFE">
    <property type="method" value="X-ray"/>
    <property type="resolution" value="3.10 A"/>
    <property type="chains" value="R9/Y9=1-37"/>
</dbReference>
<dbReference type="PDB" id="5DOX">
    <property type="method" value="X-ray"/>
    <property type="resolution" value="3.10 A"/>
    <property type="chains" value="19/29=1-37"/>
</dbReference>
<dbReference type="PDB" id="5DOY">
    <property type="method" value="X-ray"/>
    <property type="resolution" value="2.60 A"/>
    <property type="chains" value="19/29=1-37"/>
</dbReference>
<dbReference type="PDB" id="5F8K">
    <property type="method" value="X-ray"/>
    <property type="resolution" value="2.80 A"/>
    <property type="chains" value="19/29=1-37"/>
</dbReference>
<dbReference type="PDB" id="5FDU">
    <property type="method" value="X-ray"/>
    <property type="resolution" value="2.90 A"/>
    <property type="chains" value="19/29=1-37"/>
</dbReference>
<dbReference type="PDB" id="5FDV">
    <property type="method" value="X-ray"/>
    <property type="resolution" value="2.80 A"/>
    <property type="chains" value="19/29=1-37"/>
</dbReference>
<dbReference type="PDB" id="5HAU">
    <property type="method" value="X-ray"/>
    <property type="resolution" value="3.00 A"/>
    <property type="chains" value="17/27=1-37"/>
</dbReference>
<dbReference type="PDB" id="5HCP">
    <property type="method" value="X-ray"/>
    <property type="resolution" value="2.89 A"/>
    <property type="chains" value="19/29=1-37"/>
</dbReference>
<dbReference type="PDB" id="5HCQ">
    <property type="method" value="X-ray"/>
    <property type="resolution" value="2.80 A"/>
    <property type="chains" value="19/29=1-37"/>
</dbReference>
<dbReference type="PDB" id="5HCR">
    <property type="method" value="X-ray"/>
    <property type="resolution" value="2.80 A"/>
    <property type="chains" value="19/29=1-37"/>
</dbReference>
<dbReference type="PDB" id="5HD1">
    <property type="method" value="X-ray"/>
    <property type="resolution" value="2.70 A"/>
    <property type="chains" value="19/29=1-37"/>
</dbReference>
<dbReference type="PDB" id="5IMQ">
    <property type="method" value="EM"/>
    <property type="resolution" value="3.80 A"/>
    <property type="chains" value="1=1-37"/>
</dbReference>
<dbReference type="PDB" id="5IMR">
    <property type="method" value="EM"/>
    <property type="chains" value="1=1-37"/>
</dbReference>
<dbReference type="PDB" id="5J30">
    <property type="method" value="X-ray"/>
    <property type="resolution" value="3.20 A"/>
    <property type="chains" value="R9/Y9=1-37"/>
</dbReference>
<dbReference type="PDB" id="5J3C">
    <property type="method" value="X-ray"/>
    <property type="resolution" value="3.04 A"/>
    <property type="chains" value="R9/Y9=1-37"/>
</dbReference>
<dbReference type="PDB" id="5J4B">
    <property type="method" value="X-ray"/>
    <property type="resolution" value="2.60 A"/>
    <property type="chains" value="19/29=1-37"/>
</dbReference>
<dbReference type="PDB" id="5J4C">
    <property type="method" value="X-ray"/>
    <property type="resolution" value="2.80 A"/>
    <property type="chains" value="19/29=1-37"/>
</dbReference>
<dbReference type="PDB" id="5J8B">
    <property type="method" value="X-ray"/>
    <property type="resolution" value="2.60 A"/>
    <property type="chains" value="9=1-37"/>
</dbReference>
<dbReference type="PDB" id="5OT7">
    <property type="method" value="EM"/>
    <property type="resolution" value="3.80 A"/>
    <property type="chains" value="e=1-37"/>
</dbReference>
<dbReference type="PDB" id="5UQ7">
    <property type="method" value="EM"/>
    <property type="resolution" value="3.50 A"/>
    <property type="chains" value="9=1-37"/>
</dbReference>
<dbReference type="PDB" id="5UQ8">
    <property type="method" value="EM"/>
    <property type="resolution" value="3.20 A"/>
    <property type="chains" value="9=1-37"/>
</dbReference>
<dbReference type="PDB" id="5VP2">
    <property type="method" value="X-ray"/>
    <property type="resolution" value="2.80 A"/>
    <property type="chains" value="19/29=1-37"/>
</dbReference>
<dbReference type="PDB" id="5VPO">
    <property type="method" value="X-ray"/>
    <property type="resolution" value="3.34 A"/>
    <property type="chains" value="R9/Y9=1-37"/>
</dbReference>
<dbReference type="PDB" id="5VPP">
    <property type="method" value="X-ray"/>
    <property type="resolution" value="3.90 A"/>
    <property type="chains" value="R9/Y9=1-37"/>
</dbReference>
<dbReference type="PDB" id="5W4K">
    <property type="method" value="X-ray"/>
    <property type="resolution" value="2.70 A"/>
    <property type="chains" value="19/29=1-37"/>
</dbReference>
<dbReference type="PDB" id="5WIS">
    <property type="method" value="X-ray"/>
    <property type="resolution" value="2.70 A"/>
    <property type="chains" value="19/29=1-37"/>
</dbReference>
<dbReference type="PDB" id="5WIT">
    <property type="method" value="X-ray"/>
    <property type="resolution" value="2.60 A"/>
    <property type="chains" value="19/29=1-37"/>
</dbReference>
<dbReference type="PDB" id="5ZLU">
    <property type="method" value="EM"/>
    <property type="resolution" value="3.60 A"/>
    <property type="chains" value="BB=1-37"/>
</dbReference>
<dbReference type="PDB" id="6BUW">
    <property type="method" value="X-ray"/>
    <property type="resolution" value="3.50 A"/>
    <property type="chains" value="R9/Y9=1-37"/>
</dbReference>
<dbReference type="PDB" id="6BZ6">
    <property type="method" value="X-ray"/>
    <property type="resolution" value="3.18 A"/>
    <property type="chains" value="R9/Y9=1-37"/>
</dbReference>
<dbReference type="PDB" id="6BZ7">
    <property type="method" value="X-ray"/>
    <property type="resolution" value="3.68 A"/>
    <property type="chains" value="R9/Y9=1-37"/>
</dbReference>
<dbReference type="PDB" id="6BZ8">
    <property type="method" value="X-ray"/>
    <property type="resolution" value="3.74 A"/>
    <property type="chains" value="R9/Y9=1-37"/>
</dbReference>
<dbReference type="PDB" id="6C5L">
    <property type="method" value="X-ray"/>
    <property type="resolution" value="3.20 A"/>
    <property type="chains" value="B9/D9=1-37"/>
</dbReference>
<dbReference type="PDB" id="6CAE">
    <property type="method" value="X-ray"/>
    <property type="resolution" value="2.60 A"/>
    <property type="chains" value="19/29=1-37"/>
</dbReference>
<dbReference type="PDB" id="6CFJ">
    <property type="method" value="X-ray"/>
    <property type="resolution" value="2.80 A"/>
    <property type="chains" value="19/29=1-37"/>
</dbReference>
<dbReference type="PDB" id="6CFK">
    <property type="method" value="X-ray"/>
    <property type="resolution" value="2.70 A"/>
    <property type="chains" value="19/29=1-37"/>
</dbReference>
<dbReference type="PDB" id="6CFL">
    <property type="method" value="X-ray"/>
    <property type="resolution" value="2.60 A"/>
    <property type="chains" value="19/29=1-37"/>
</dbReference>
<dbReference type="PDB" id="6CZR">
    <property type="method" value="X-ray"/>
    <property type="resolution" value="3.14 A"/>
    <property type="chains" value="19/29=1-37"/>
</dbReference>
<dbReference type="PDB" id="6FKR">
    <property type="method" value="X-ray"/>
    <property type="resolution" value="3.20 A"/>
    <property type="chains" value="19/29=1-37"/>
</dbReference>
<dbReference type="PDB" id="6GZQ">
    <property type="method" value="EM"/>
    <property type="resolution" value="3.28 A"/>
    <property type="chains" value="e1=2-37"/>
</dbReference>
<dbReference type="PDB" id="6GZX">
    <property type="method" value="EM"/>
    <property type="resolution" value="4.57 A"/>
    <property type="chains" value="e1/e2=2-37"/>
</dbReference>
<dbReference type="PDB" id="6GZZ">
    <property type="method" value="EM"/>
    <property type="resolution" value="4.13 A"/>
    <property type="chains" value="e1/e2=2-37"/>
</dbReference>
<dbReference type="PDB" id="6N9E">
    <property type="method" value="X-ray"/>
    <property type="resolution" value="3.70 A"/>
    <property type="chains" value="19/29=1-37"/>
</dbReference>
<dbReference type="PDB" id="6N9F">
    <property type="method" value="X-ray"/>
    <property type="resolution" value="3.70 A"/>
    <property type="chains" value="19/29=1-37"/>
</dbReference>
<dbReference type="PDB" id="6ND5">
    <property type="method" value="X-ray"/>
    <property type="resolution" value="2.60 A"/>
    <property type="chains" value="19/29=1-37"/>
</dbReference>
<dbReference type="PDB" id="6ND6">
    <property type="method" value="X-ray"/>
    <property type="resolution" value="2.85 A"/>
    <property type="chains" value="19/29=1-37"/>
</dbReference>
<dbReference type="PDB" id="6NDK">
    <property type="method" value="X-ray"/>
    <property type="resolution" value="3.64 A"/>
    <property type="chains" value="R9/Y9=1-37"/>
</dbReference>
<dbReference type="PDB" id="6NSH">
    <property type="method" value="X-ray"/>
    <property type="resolution" value="3.40 A"/>
    <property type="chains" value="R9/Y9=1-37"/>
</dbReference>
<dbReference type="PDB" id="6NTA">
    <property type="method" value="X-ray"/>
    <property type="resolution" value="3.10 A"/>
    <property type="chains" value="R9/Y9=1-37"/>
</dbReference>
<dbReference type="PDB" id="6NUO">
    <property type="method" value="X-ray"/>
    <property type="resolution" value="3.20 A"/>
    <property type="chains" value="R9/Y9=1-37"/>
</dbReference>
<dbReference type="PDB" id="6NWY">
    <property type="method" value="X-ray"/>
    <property type="resolution" value="3.50 A"/>
    <property type="chains" value="R9/Y9=1-37"/>
</dbReference>
<dbReference type="PDB" id="6O3M">
    <property type="method" value="X-ray"/>
    <property type="resolution" value="3.97 A"/>
    <property type="chains" value="R9/Y9=1-37"/>
</dbReference>
<dbReference type="PDB" id="6O97">
    <property type="method" value="X-ray"/>
    <property type="resolution" value="2.75 A"/>
    <property type="chains" value="19/29=1-37"/>
</dbReference>
<dbReference type="PDB" id="6OF1">
    <property type="method" value="X-ray"/>
    <property type="resolution" value="2.80 A"/>
    <property type="chains" value="19/29=1-37"/>
</dbReference>
<dbReference type="PDB" id="6OF6">
    <property type="method" value="X-ray"/>
    <property type="resolution" value="3.20 A"/>
    <property type="chains" value="R9/Y9=1-37"/>
</dbReference>
<dbReference type="PDB" id="6OJ2">
    <property type="method" value="X-ray"/>
    <property type="resolution" value="3.20 A"/>
    <property type="chains" value="R9/Y9=1-37"/>
</dbReference>
<dbReference type="PDB" id="6OPE">
    <property type="method" value="X-ray"/>
    <property type="resolution" value="3.10 A"/>
    <property type="chains" value="R9/Y9=1-37"/>
</dbReference>
<dbReference type="PDB" id="6ORD">
    <property type="method" value="X-ray"/>
    <property type="resolution" value="3.10 A"/>
    <property type="chains" value="R9/Y9=1-37"/>
</dbReference>
<dbReference type="PDB" id="6OSI">
    <property type="method" value="X-ray"/>
    <property type="resolution" value="4.14 A"/>
    <property type="chains" value="R9/Y9=1-37"/>
</dbReference>
<dbReference type="PDB" id="6OTR">
    <property type="method" value="X-ray"/>
    <property type="resolution" value="3.12 A"/>
    <property type="chains" value="R9/Y9=1-37"/>
</dbReference>
<dbReference type="PDB" id="6OXA">
    <property type="method" value="X-ray"/>
    <property type="resolution" value="3.25 A"/>
    <property type="chains" value="R9/Y9=1-37"/>
</dbReference>
<dbReference type="PDB" id="6OXI">
    <property type="method" value="X-ray"/>
    <property type="resolution" value="3.50 A"/>
    <property type="chains" value="R9/Y9=1-37"/>
</dbReference>
<dbReference type="PDB" id="6Q95">
    <property type="method" value="EM"/>
    <property type="resolution" value="3.70 A"/>
    <property type="chains" value="f=1-37"/>
</dbReference>
<dbReference type="PDB" id="6UCQ">
    <property type="method" value="X-ray"/>
    <property type="resolution" value="3.50 A"/>
    <property type="chains" value="19/29=1-37"/>
</dbReference>
<dbReference type="PDB" id="6UO1">
    <property type="method" value="X-ray"/>
    <property type="resolution" value="2.95 A"/>
    <property type="chains" value="19/29=1-37"/>
</dbReference>
<dbReference type="PDB" id="6XHV">
    <property type="method" value="X-ray"/>
    <property type="resolution" value="2.40 A"/>
    <property type="chains" value="19/29=1-37"/>
</dbReference>
<dbReference type="PDB" id="6XHW">
    <property type="method" value="X-ray"/>
    <property type="resolution" value="2.50 A"/>
    <property type="chains" value="19/29=1-37"/>
</dbReference>
<dbReference type="PDB" id="6XHX">
    <property type="method" value="X-ray"/>
    <property type="resolution" value="2.55 A"/>
    <property type="chains" value="19/29=1-37"/>
</dbReference>
<dbReference type="PDB" id="6XHY">
    <property type="method" value="X-ray"/>
    <property type="resolution" value="2.60 A"/>
    <property type="chains" value="19/29=1-37"/>
</dbReference>
<dbReference type="PDB" id="6XQD">
    <property type="method" value="X-ray"/>
    <property type="resolution" value="2.80 A"/>
    <property type="chains" value="19/29=1-37"/>
</dbReference>
<dbReference type="PDB" id="6XQE">
    <property type="method" value="X-ray"/>
    <property type="resolution" value="3.00 A"/>
    <property type="chains" value="19/29=1-37"/>
</dbReference>
<dbReference type="PDB" id="7JQL">
    <property type="method" value="X-ray"/>
    <property type="resolution" value="3.00 A"/>
    <property type="chains" value="19/29=1-37"/>
</dbReference>
<dbReference type="PDB" id="7JQM">
    <property type="method" value="X-ray"/>
    <property type="resolution" value="3.05 A"/>
    <property type="chains" value="19/29=1-37"/>
</dbReference>
<dbReference type="PDB" id="7LH5">
    <property type="method" value="X-ray"/>
    <property type="resolution" value="3.27 A"/>
    <property type="chains" value="B9/D9=1-37"/>
</dbReference>
<dbReference type="PDB" id="7MD7">
    <property type="method" value="X-ray"/>
    <property type="resolution" value="2.80 A"/>
    <property type="chains" value="19/29=1-37"/>
</dbReference>
<dbReference type="PDB" id="7RQ8">
    <property type="method" value="X-ray"/>
    <property type="resolution" value="2.50 A"/>
    <property type="chains" value="19/29=1-37"/>
</dbReference>
<dbReference type="PDB" id="7RQ9">
    <property type="method" value="X-ray"/>
    <property type="resolution" value="2.60 A"/>
    <property type="chains" value="19/29=1-37"/>
</dbReference>
<dbReference type="PDB" id="7RQA">
    <property type="method" value="X-ray"/>
    <property type="resolution" value="2.40 A"/>
    <property type="chains" value="19/29=1-37"/>
</dbReference>
<dbReference type="PDB" id="7RQB">
    <property type="method" value="X-ray"/>
    <property type="resolution" value="2.45 A"/>
    <property type="chains" value="19/29=1-37"/>
</dbReference>
<dbReference type="PDB" id="7RQC">
    <property type="method" value="X-ray"/>
    <property type="resolution" value="2.50 A"/>
    <property type="chains" value="19/29=1-37"/>
</dbReference>
<dbReference type="PDB" id="7RQD">
    <property type="method" value="X-ray"/>
    <property type="resolution" value="2.50 A"/>
    <property type="chains" value="19/29=1-37"/>
</dbReference>
<dbReference type="PDB" id="7RQE">
    <property type="method" value="X-ray"/>
    <property type="resolution" value="2.40 A"/>
    <property type="chains" value="19/29=1-37"/>
</dbReference>
<dbReference type="PDB" id="7U2H">
    <property type="method" value="X-ray"/>
    <property type="resolution" value="2.55 A"/>
    <property type="chains" value="19/29=1-37"/>
</dbReference>
<dbReference type="PDB" id="7U2I">
    <property type="method" value="X-ray"/>
    <property type="resolution" value="2.55 A"/>
    <property type="chains" value="19/29=1-37"/>
</dbReference>
<dbReference type="PDB" id="7U2J">
    <property type="method" value="X-ray"/>
    <property type="resolution" value="2.55 A"/>
    <property type="chains" value="19/29=1-37"/>
</dbReference>
<dbReference type="PDB" id="8CVJ">
    <property type="method" value="X-ray"/>
    <property type="resolution" value="2.40 A"/>
    <property type="chains" value="19/29=1-37"/>
</dbReference>
<dbReference type="PDB" id="8CVK">
    <property type="method" value="X-ray"/>
    <property type="resolution" value="2.50 A"/>
    <property type="chains" value="19/29=1-37"/>
</dbReference>
<dbReference type="PDB" id="8CVL">
    <property type="method" value="X-ray"/>
    <property type="resolution" value="2.30 A"/>
    <property type="chains" value="19/29=1-37"/>
</dbReference>
<dbReference type="PDB" id="8EKB">
    <property type="method" value="X-ray"/>
    <property type="resolution" value="2.70 A"/>
    <property type="chains" value="19/29=1-37"/>
</dbReference>
<dbReference type="PDB" id="8EV6">
    <property type="method" value="X-ray"/>
    <property type="resolution" value="2.95 A"/>
    <property type="chains" value="19/29=1-37"/>
</dbReference>
<dbReference type="PDB" id="8EV7">
    <property type="method" value="X-ray"/>
    <property type="resolution" value="2.89 A"/>
    <property type="chains" value="19/29=1-37"/>
</dbReference>
<dbReference type="PDB" id="8FC1">
    <property type="method" value="X-ray"/>
    <property type="resolution" value="2.50 A"/>
    <property type="chains" value="19/29=1-37"/>
</dbReference>
<dbReference type="PDB" id="8FC2">
    <property type="method" value="X-ray"/>
    <property type="resolution" value="2.50 A"/>
    <property type="chains" value="19/29=1-37"/>
</dbReference>
<dbReference type="PDB" id="8FC3">
    <property type="method" value="X-ray"/>
    <property type="resolution" value="2.60 A"/>
    <property type="chains" value="19/29=1-37"/>
</dbReference>
<dbReference type="PDB" id="8FC4">
    <property type="method" value="X-ray"/>
    <property type="resolution" value="2.45 A"/>
    <property type="chains" value="19/29=1-37"/>
</dbReference>
<dbReference type="PDB" id="8FC5">
    <property type="method" value="X-ray"/>
    <property type="resolution" value="2.65 A"/>
    <property type="chains" value="19/29=1-37"/>
</dbReference>
<dbReference type="PDB" id="8FC6">
    <property type="method" value="X-ray"/>
    <property type="resolution" value="2.35 A"/>
    <property type="chains" value="19/29=1-37"/>
</dbReference>
<dbReference type="PDB" id="8FOM">
    <property type="method" value="X-ray"/>
    <property type="resolution" value="3.58 A"/>
    <property type="chains" value="R9/Y9=1-37"/>
</dbReference>
<dbReference type="PDB" id="8FON">
    <property type="method" value="X-ray"/>
    <property type="resolution" value="3.64 A"/>
    <property type="chains" value="R9/Y9=1-37"/>
</dbReference>
<dbReference type="PDB" id="8G29">
    <property type="method" value="X-ray"/>
    <property type="resolution" value="2.55 A"/>
    <property type="chains" value="19/29=1-37"/>
</dbReference>
<dbReference type="PDB" id="8G2A">
    <property type="method" value="X-ray"/>
    <property type="resolution" value="2.45 A"/>
    <property type="chains" value="19/29=1-37"/>
</dbReference>
<dbReference type="PDB" id="8G2B">
    <property type="method" value="X-ray"/>
    <property type="resolution" value="2.55 A"/>
    <property type="chains" value="19/29=1-37"/>
</dbReference>
<dbReference type="PDB" id="8G2C">
    <property type="method" value="X-ray"/>
    <property type="resolution" value="2.65 A"/>
    <property type="chains" value="19/29=1-37"/>
</dbReference>
<dbReference type="PDB" id="8G2D">
    <property type="method" value="X-ray"/>
    <property type="resolution" value="2.70 A"/>
    <property type="chains" value="19/29=1-37"/>
</dbReference>
<dbReference type="PDB" id="8T8B">
    <property type="method" value="X-ray"/>
    <property type="resolution" value="2.65 A"/>
    <property type="chains" value="19/29=1-37"/>
</dbReference>
<dbReference type="PDB" id="8T8C">
    <property type="method" value="X-ray"/>
    <property type="resolution" value="2.60 A"/>
    <property type="chains" value="19/29=1-37"/>
</dbReference>
<dbReference type="PDB" id="8UD6">
    <property type="method" value="X-ray"/>
    <property type="resolution" value="2.70 A"/>
    <property type="chains" value="19/29=1-37"/>
</dbReference>
<dbReference type="PDB" id="8UD7">
    <property type="method" value="X-ray"/>
    <property type="resolution" value="2.55 A"/>
    <property type="chains" value="19/29=1-37"/>
</dbReference>
<dbReference type="PDB" id="8UD8">
    <property type="method" value="X-ray"/>
    <property type="resolution" value="2.60 A"/>
    <property type="chains" value="19/29=1-37"/>
</dbReference>
<dbReference type="PDB" id="8UVR">
    <property type="method" value="X-ray"/>
    <property type="resolution" value="2.60 A"/>
    <property type="chains" value="19/29=1-37"/>
</dbReference>
<dbReference type="PDB" id="8UVS">
    <property type="method" value="X-ray"/>
    <property type="resolution" value="2.75 A"/>
    <property type="chains" value="19/29=1-37"/>
</dbReference>
<dbReference type="PDB" id="8VTU">
    <property type="method" value="X-ray"/>
    <property type="resolution" value="2.40 A"/>
    <property type="chains" value="19/29=1-37"/>
</dbReference>
<dbReference type="PDB" id="8VTV">
    <property type="method" value="X-ray"/>
    <property type="resolution" value="2.55 A"/>
    <property type="chains" value="19/29=1-37"/>
</dbReference>
<dbReference type="PDB" id="8VTW">
    <property type="method" value="X-ray"/>
    <property type="resolution" value="2.35 A"/>
    <property type="chains" value="19/29=1-37"/>
</dbReference>
<dbReference type="PDB" id="8VTX">
    <property type="method" value="X-ray"/>
    <property type="resolution" value="2.40 A"/>
    <property type="chains" value="19/29=1-37"/>
</dbReference>
<dbReference type="PDB" id="8VTY">
    <property type="method" value="X-ray"/>
    <property type="resolution" value="2.60 A"/>
    <property type="chains" value="19/29=1-37"/>
</dbReference>
<dbReference type="PDB" id="8WV1">
    <property type="method" value="X-ray"/>
    <property type="resolution" value="3.99 A"/>
    <property type="chains" value="4/9=1-37"/>
</dbReference>
<dbReference type="PDB" id="9B00">
    <property type="method" value="X-ray"/>
    <property type="resolution" value="2.80 A"/>
    <property type="chains" value="19/29=1-37"/>
</dbReference>
<dbReference type="PDB" id="9D0J">
    <property type="method" value="X-ray"/>
    <property type="resolution" value="2.50 A"/>
    <property type="chains" value="19/29=1-37"/>
</dbReference>
<dbReference type="PDB" id="9D7R">
    <property type="method" value="X-ray"/>
    <property type="resolution" value="2.70 A"/>
    <property type="chains" value="19/29=1-37"/>
</dbReference>
<dbReference type="PDB" id="9D7S">
    <property type="method" value="X-ray"/>
    <property type="resolution" value="2.85 A"/>
    <property type="chains" value="19/29=1-37"/>
</dbReference>
<dbReference type="PDB" id="9D7T">
    <property type="method" value="X-ray"/>
    <property type="resolution" value="2.70 A"/>
    <property type="chains" value="19/29=1-37"/>
</dbReference>
<dbReference type="PDB" id="9DFC">
    <property type="method" value="X-ray"/>
    <property type="resolution" value="2.50 A"/>
    <property type="chains" value="19/29=1-37"/>
</dbReference>
<dbReference type="PDB" id="9DFD">
    <property type="method" value="X-ray"/>
    <property type="resolution" value="2.60 A"/>
    <property type="chains" value="19/29=1-37"/>
</dbReference>
<dbReference type="PDB" id="9DFE">
    <property type="method" value="X-ray"/>
    <property type="resolution" value="2.60 A"/>
    <property type="chains" value="19/29=1-37"/>
</dbReference>
<dbReference type="PDBsum" id="1VY4"/>
<dbReference type="PDBsum" id="1VY5"/>
<dbReference type="PDBsum" id="1VY6"/>
<dbReference type="PDBsum" id="1VY7"/>
<dbReference type="PDBsum" id="4P6F"/>
<dbReference type="PDBsum" id="4P70"/>
<dbReference type="PDBsum" id="4TUA"/>
<dbReference type="PDBsum" id="4TUB"/>
<dbReference type="PDBsum" id="4TUC"/>
<dbReference type="PDBsum" id="4TUD"/>
<dbReference type="PDBsum" id="4TUE"/>
<dbReference type="PDBsum" id="4V4P"/>
<dbReference type="PDBsum" id="4V4X"/>
<dbReference type="PDBsum" id="4V4Y"/>
<dbReference type="PDBsum" id="4V4Z"/>
<dbReference type="PDBsum" id="4V51"/>
<dbReference type="PDBsum" id="4V5C"/>
<dbReference type="PDBsum" id="4V5D"/>
<dbReference type="PDBsum" id="4V5E"/>
<dbReference type="PDBsum" id="4V5F"/>
<dbReference type="PDBsum" id="4V5G"/>
<dbReference type="PDBsum" id="4V5J"/>
<dbReference type="PDBsum" id="4V5K"/>
<dbReference type="PDBsum" id="4V5L"/>
<dbReference type="PDBsum" id="4V5M"/>
<dbReference type="PDBsum" id="4V5N"/>
<dbReference type="PDBsum" id="4V5P"/>
<dbReference type="PDBsum" id="4V5Q"/>
<dbReference type="PDBsum" id="4V5R"/>
<dbReference type="PDBsum" id="4V5S"/>
<dbReference type="PDBsum" id="4V68"/>
<dbReference type="PDBsum" id="4V6A"/>
<dbReference type="PDBsum" id="4V7J"/>
<dbReference type="PDBsum" id="4V7K"/>
<dbReference type="PDBsum" id="4V7L"/>
<dbReference type="PDBsum" id="4V7M"/>
<dbReference type="PDBsum" id="4V8G"/>
<dbReference type="PDBsum" id="4V8H"/>
<dbReference type="PDBsum" id="4V8I"/>
<dbReference type="PDBsum" id="4V8J"/>
<dbReference type="PDBsum" id="4V8N"/>
<dbReference type="PDBsum" id="4V8O"/>
<dbReference type="PDBsum" id="4V8Q"/>
<dbReference type="PDBsum" id="4V8U"/>
<dbReference type="PDBsum" id="4V8X"/>
<dbReference type="PDBsum" id="4V90"/>
<dbReference type="PDBsum" id="4V95"/>
<dbReference type="PDBsum" id="4V97"/>
<dbReference type="PDBsum" id="4V9H"/>
<dbReference type="PDBsum" id="4V9I"/>
<dbReference type="PDBsum" id="4V9R"/>
<dbReference type="PDBsum" id="4V9S"/>
<dbReference type="PDBsum" id="4W2E"/>
<dbReference type="PDBsum" id="4W2F"/>
<dbReference type="PDBsum" id="4W2G"/>
<dbReference type="PDBsum" id="4W2H"/>
<dbReference type="PDBsum" id="4W2I"/>
<dbReference type="PDBsum" id="4W4G"/>
<dbReference type="PDBsum" id="4WPO"/>
<dbReference type="PDBsum" id="4WQF"/>
<dbReference type="PDBsum" id="4WQU"/>
<dbReference type="PDBsum" id="4WQY"/>
<dbReference type="PDBsum" id="4WT8"/>
<dbReference type="PDBsum" id="4Y4O"/>
<dbReference type="PDBsum" id="4Y4P"/>
<dbReference type="PDBsum" id="4YPB"/>
<dbReference type="PDBsum" id="4YZV"/>
<dbReference type="PDBsum" id="4Z3S"/>
<dbReference type="PDBsum" id="4Z8C"/>
<dbReference type="PDBsum" id="4ZER"/>
<dbReference type="PDBsum" id="4ZSN"/>
<dbReference type="PDBsum" id="5A9Z"/>
<dbReference type="PDBsum" id="5AA0"/>
<dbReference type="PDBsum" id="5CZP"/>
<dbReference type="PDBsum" id="5DFE"/>
<dbReference type="PDBsum" id="5DOX"/>
<dbReference type="PDBsum" id="5DOY"/>
<dbReference type="PDBsum" id="5F8K"/>
<dbReference type="PDBsum" id="5FDU"/>
<dbReference type="PDBsum" id="5FDV"/>
<dbReference type="PDBsum" id="5HAU"/>
<dbReference type="PDBsum" id="5HCP"/>
<dbReference type="PDBsum" id="5HCQ"/>
<dbReference type="PDBsum" id="5HCR"/>
<dbReference type="PDBsum" id="5HD1"/>
<dbReference type="PDBsum" id="5IMQ"/>
<dbReference type="PDBsum" id="5IMR"/>
<dbReference type="PDBsum" id="5J30"/>
<dbReference type="PDBsum" id="5J3C"/>
<dbReference type="PDBsum" id="5J4B"/>
<dbReference type="PDBsum" id="5J4C"/>
<dbReference type="PDBsum" id="5J8B"/>
<dbReference type="PDBsum" id="5OT7"/>
<dbReference type="PDBsum" id="5UQ7"/>
<dbReference type="PDBsum" id="5UQ8"/>
<dbReference type="PDBsum" id="5VP2"/>
<dbReference type="PDBsum" id="5VPO"/>
<dbReference type="PDBsum" id="5VPP"/>
<dbReference type="PDBsum" id="5W4K"/>
<dbReference type="PDBsum" id="5WIS"/>
<dbReference type="PDBsum" id="5WIT"/>
<dbReference type="PDBsum" id="5ZLU"/>
<dbReference type="PDBsum" id="6BUW"/>
<dbReference type="PDBsum" id="6BZ6"/>
<dbReference type="PDBsum" id="6BZ7"/>
<dbReference type="PDBsum" id="6BZ8"/>
<dbReference type="PDBsum" id="6C5L"/>
<dbReference type="PDBsum" id="6CAE"/>
<dbReference type="PDBsum" id="6CFJ"/>
<dbReference type="PDBsum" id="6CFK"/>
<dbReference type="PDBsum" id="6CFL"/>
<dbReference type="PDBsum" id="6CZR"/>
<dbReference type="PDBsum" id="6FKR"/>
<dbReference type="PDBsum" id="6GZQ"/>
<dbReference type="PDBsum" id="6GZX"/>
<dbReference type="PDBsum" id="6GZZ"/>
<dbReference type="PDBsum" id="6N9E"/>
<dbReference type="PDBsum" id="6N9F"/>
<dbReference type="PDBsum" id="6ND5"/>
<dbReference type="PDBsum" id="6ND6"/>
<dbReference type="PDBsum" id="6NDK"/>
<dbReference type="PDBsum" id="6NSH"/>
<dbReference type="PDBsum" id="6NTA"/>
<dbReference type="PDBsum" id="6NUO"/>
<dbReference type="PDBsum" id="6NWY"/>
<dbReference type="PDBsum" id="6O3M"/>
<dbReference type="PDBsum" id="6O97"/>
<dbReference type="PDBsum" id="6OF1"/>
<dbReference type="PDBsum" id="6OF6"/>
<dbReference type="PDBsum" id="6OJ2"/>
<dbReference type="PDBsum" id="6OPE"/>
<dbReference type="PDBsum" id="6ORD"/>
<dbReference type="PDBsum" id="6OSI"/>
<dbReference type="PDBsum" id="6OTR"/>
<dbReference type="PDBsum" id="6OXA"/>
<dbReference type="PDBsum" id="6OXI"/>
<dbReference type="PDBsum" id="6Q95"/>
<dbReference type="PDBsum" id="6UCQ"/>
<dbReference type="PDBsum" id="6UO1"/>
<dbReference type="PDBsum" id="6XHV"/>
<dbReference type="PDBsum" id="6XHW"/>
<dbReference type="PDBsum" id="6XHX"/>
<dbReference type="PDBsum" id="6XHY"/>
<dbReference type="PDBsum" id="6XQD"/>
<dbReference type="PDBsum" id="6XQE"/>
<dbReference type="PDBsum" id="7JQL"/>
<dbReference type="PDBsum" id="7JQM"/>
<dbReference type="PDBsum" id="7LH5"/>
<dbReference type="PDBsum" id="7MD7"/>
<dbReference type="PDBsum" id="7RQ8"/>
<dbReference type="PDBsum" id="7RQ9"/>
<dbReference type="PDBsum" id="7RQA"/>
<dbReference type="PDBsum" id="7RQB"/>
<dbReference type="PDBsum" id="7RQC"/>
<dbReference type="PDBsum" id="7RQD"/>
<dbReference type="PDBsum" id="7RQE"/>
<dbReference type="PDBsum" id="7U2H"/>
<dbReference type="PDBsum" id="7U2I"/>
<dbReference type="PDBsum" id="7U2J"/>
<dbReference type="PDBsum" id="8CVJ"/>
<dbReference type="PDBsum" id="8CVK"/>
<dbReference type="PDBsum" id="8CVL"/>
<dbReference type="PDBsum" id="8EKB"/>
<dbReference type="PDBsum" id="8EV6"/>
<dbReference type="PDBsum" id="8EV7"/>
<dbReference type="PDBsum" id="8FC1"/>
<dbReference type="PDBsum" id="8FC2"/>
<dbReference type="PDBsum" id="8FC3"/>
<dbReference type="PDBsum" id="8FC4"/>
<dbReference type="PDBsum" id="8FC5"/>
<dbReference type="PDBsum" id="8FC6"/>
<dbReference type="PDBsum" id="8FOM"/>
<dbReference type="PDBsum" id="8FON"/>
<dbReference type="PDBsum" id="8G29"/>
<dbReference type="PDBsum" id="8G2A"/>
<dbReference type="PDBsum" id="8G2B"/>
<dbReference type="PDBsum" id="8G2C"/>
<dbReference type="PDBsum" id="8G2D"/>
<dbReference type="PDBsum" id="8T8B"/>
<dbReference type="PDBsum" id="8T8C"/>
<dbReference type="PDBsum" id="8UD6"/>
<dbReference type="PDBsum" id="8UD7"/>
<dbReference type="PDBsum" id="8UD8"/>
<dbReference type="PDBsum" id="8UVR"/>
<dbReference type="PDBsum" id="8UVS"/>
<dbReference type="PDBsum" id="8VTU"/>
<dbReference type="PDBsum" id="8VTV"/>
<dbReference type="PDBsum" id="8VTW"/>
<dbReference type="PDBsum" id="8VTX"/>
<dbReference type="PDBsum" id="8VTY"/>
<dbReference type="PDBsum" id="8WV1"/>
<dbReference type="PDBsum" id="9B00"/>
<dbReference type="PDBsum" id="9D0J"/>
<dbReference type="PDBsum" id="9D7R"/>
<dbReference type="PDBsum" id="9D7S"/>
<dbReference type="PDBsum" id="9D7T"/>
<dbReference type="PDBsum" id="9DFC"/>
<dbReference type="PDBsum" id="9DFD"/>
<dbReference type="PDBsum" id="9DFE"/>
<dbReference type="EMDB" id="EMD-0101"/>
<dbReference type="EMDB" id="EMD-0104"/>
<dbReference type="EMDB" id="EMD-0105"/>
<dbReference type="EMDB" id="EMD-3852"/>
<dbReference type="EMDB" id="EMD-6934"/>
<dbReference type="EMDB" id="EMD-8596"/>
<dbReference type="EMDB" id="EMD-8597"/>
<dbReference type="SMR" id="Q5SHR2"/>
<dbReference type="IntAct" id="Q5SHR2">
    <property type="interactions" value="8"/>
</dbReference>
<dbReference type="EnsemblBacteria" id="BAD71491">
    <property type="protein sequence ID" value="BAD71491"/>
    <property type="gene ID" value="BAD71491"/>
</dbReference>
<dbReference type="GeneID" id="3167970"/>
<dbReference type="KEGG" id="ttj:TTHA1668"/>
<dbReference type="PATRIC" id="fig|300852.9.peg.1638"/>
<dbReference type="eggNOG" id="COG0257">
    <property type="taxonomic scope" value="Bacteria"/>
</dbReference>
<dbReference type="HOGENOM" id="CLU_135723_6_2_0"/>
<dbReference type="PhylomeDB" id="Q5SHR2"/>
<dbReference type="Proteomes" id="UP000000532">
    <property type="component" value="Chromosome"/>
</dbReference>
<dbReference type="GO" id="GO:0005737">
    <property type="term" value="C:cytoplasm"/>
    <property type="evidence" value="ECO:0007669"/>
    <property type="project" value="UniProtKB-ARBA"/>
</dbReference>
<dbReference type="GO" id="GO:1990904">
    <property type="term" value="C:ribonucleoprotein complex"/>
    <property type="evidence" value="ECO:0007669"/>
    <property type="project" value="UniProtKB-KW"/>
</dbReference>
<dbReference type="GO" id="GO:0005840">
    <property type="term" value="C:ribosome"/>
    <property type="evidence" value="ECO:0007669"/>
    <property type="project" value="UniProtKB-KW"/>
</dbReference>
<dbReference type="GO" id="GO:0046872">
    <property type="term" value="F:metal ion binding"/>
    <property type="evidence" value="ECO:0007669"/>
    <property type="project" value="UniProtKB-KW"/>
</dbReference>
<dbReference type="GO" id="GO:0003735">
    <property type="term" value="F:structural constituent of ribosome"/>
    <property type="evidence" value="ECO:0007669"/>
    <property type="project" value="InterPro"/>
</dbReference>
<dbReference type="GO" id="GO:0006412">
    <property type="term" value="P:translation"/>
    <property type="evidence" value="ECO:0007669"/>
    <property type="project" value="UniProtKB-UniRule"/>
</dbReference>
<dbReference type="HAMAP" id="MF_00251">
    <property type="entry name" value="Ribosomal_bL36"/>
    <property type="match status" value="1"/>
</dbReference>
<dbReference type="InterPro" id="IPR000473">
    <property type="entry name" value="Ribosomal_bL36"/>
</dbReference>
<dbReference type="InterPro" id="IPR035977">
    <property type="entry name" value="Ribosomal_bL36_sp"/>
</dbReference>
<dbReference type="NCBIfam" id="TIGR01022">
    <property type="entry name" value="rpmJ_bact"/>
    <property type="match status" value="1"/>
</dbReference>
<dbReference type="PANTHER" id="PTHR42888">
    <property type="entry name" value="50S RIBOSOMAL PROTEIN L36, CHLOROPLASTIC"/>
    <property type="match status" value="1"/>
</dbReference>
<dbReference type="PANTHER" id="PTHR42888:SF1">
    <property type="entry name" value="LARGE RIBOSOMAL SUBUNIT PROTEIN BL36C"/>
    <property type="match status" value="1"/>
</dbReference>
<dbReference type="Pfam" id="PF00444">
    <property type="entry name" value="Ribosomal_L36"/>
    <property type="match status" value="1"/>
</dbReference>
<dbReference type="SUPFAM" id="SSF57840">
    <property type="entry name" value="Ribosomal protein L36"/>
    <property type="match status" value="1"/>
</dbReference>
<dbReference type="PROSITE" id="PS00828">
    <property type="entry name" value="RIBOSOMAL_L36"/>
    <property type="match status" value="1"/>
</dbReference>
<reference key="1">
    <citation type="journal article" date="1995" name="Endocyt. Cell Res.">
        <title>The isolation and complete amino acid sequence of the ribosomal protein L36 from Thermus thermophilus and its zinc-binding motif.</title>
        <authorList>
            <person name="Boysen R.I."/>
            <person name="Lorenz S."/>
            <person name="Kim J.S."/>
            <person name="Schroeder W.F.K.J."/>
            <person name="Erdmann V.A."/>
        </authorList>
    </citation>
    <scope>PROTEIN SEQUENCE</scope>
</reference>
<reference key="2">
    <citation type="journal article" date="1999" name="J. Biochem.">
        <title>Cloning of the RNA polymerase alpha subunit gene from Thermus thermophilus HB8 and characterization of the protein.</title>
        <authorList>
            <person name="Wada T."/>
            <person name="Yamazaki T."/>
            <person name="Kuramitsu S."/>
            <person name="Kyogoku Y."/>
        </authorList>
    </citation>
    <scope>NUCLEOTIDE SEQUENCE [GENOMIC DNA]</scope>
</reference>
<reference key="3">
    <citation type="submission" date="2004-11" db="EMBL/GenBank/DDBJ databases">
        <title>Complete genome sequence of Thermus thermophilus HB8.</title>
        <authorList>
            <person name="Masui R."/>
            <person name="Kurokawa K."/>
            <person name="Nakagawa N."/>
            <person name="Tokunaga F."/>
            <person name="Koyama Y."/>
            <person name="Shibata T."/>
            <person name="Oshima T."/>
            <person name="Yokoyama S."/>
            <person name="Yasunaga T."/>
            <person name="Kuramitsu S."/>
        </authorList>
    </citation>
    <scope>NUCLEOTIDE SEQUENCE [LARGE SCALE GENOMIC DNA]</scope>
    <source>
        <strain>ATCC 27634 / DSM 579 / HB8</strain>
    </source>
</reference>
<reference key="4">
    <citation type="journal article" date="2000" name="Biol. Chem.">
        <title>Identification of the 50S ribosomal proteins from the eubacterium Thermus thermophilus.</title>
        <authorList>
            <person name="Katsani K.R."/>
            <person name="Tsiboli P."/>
            <person name="Anagnostopoulos K."/>
            <person name="Urlaub H."/>
            <person name="Choli-Papadopoulou T."/>
        </authorList>
    </citation>
    <scope>PROTEIN SEQUENCE OF 1-29</scope>
    <source>
        <strain>ATCC 27634 / DSM 579 / HB8</strain>
    </source>
</reference>
<reference key="5">
    <citation type="journal article" date="2005" name="Proteomics">
        <title>Extending ribosomal protein identifications to unsequenced bacterial strains using matrix-assisted laser desorption/ionization mass spectrometry.</title>
        <authorList>
            <person name="Suh M.-J."/>
            <person name="Hamburg D.M."/>
            <person name="Gregory S.T."/>
            <person name="Dahlberg A.E."/>
            <person name="Limbach P.A."/>
        </authorList>
    </citation>
    <scope>MASS SPECTROMETRY</scope>
    <source>
        <strain>ATCC 27634 / DSM 579 / HB8</strain>
    </source>
</reference>
<reference key="6">
    <citation type="journal article" date="2008" name="Science">
        <title>Insights into translational termination from the structure of RF2 bound to the ribosome.</title>
        <authorList>
            <person name="Weixlbaumer A."/>
            <person name="Jin H."/>
            <person name="Neubauer C."/>
            <person name="Voorhees R.M."/>
            <person name="Petry S."/>
            <person name="Kelley A.C."/>
            <person name="Ramakrishnan V."/>
        </authorList>
    </citation>
    <scope>X-RAY CRYSTALLOGRAPHY (3.45 ANGSTROMS) OF 70S RIBOSOME IN COMPLEX WITH RF2</scope>
    <scope>SUBUNIT</scope>
</reference>
<reference key="7">
    <citation type="journal article" date="2010" name="Proc. Natl. Acad. Sci. U.S.A.">
        <title>Structure of the 70S ribosome bound to release factor 2 and a substrate analog provides insights into catalysis of peptide release.</title>
        <authorList>
            <person name="Jin H."/>
            <person name="Kelley A.C."/>
            <person name="Loakes D."/>
            <person name="Ramakrishnan V."/>
        </authorList>
    </citation>
    <scope>X-RAY CRYSTALLOGRAPHY (3.10 ANGSTROMS) OF 70S RIBOSOME IN COMPLEX WITH RF2</scope>
    <scope>SUBUNIT</scope>
</reference>
<accession>Q5SHR2</accession>
<organism>
    <name type="scientific">Thermus thermophilus (strain ATCC 27634 / DSM 579 / HB8)</name>
    <dbReference type="NCBI Taxonomy" id="300852"/>
    <lineage>
        <taxon>Bacteria</taxon>
        <taxon>Thermotogati</taxon>
        <taxon>Deinococcota</taxon>
        <taxon>Deinococci</taxon>
        <taxon>Thermales</taxon>
        <taxon>Thermaceae</taxon>
        <taxon>Thermus</taxon>
    </lineage>
</organism>
<gene>
    <name type="primary">rpmJ</name>
    <name type="ordered locus">TTHA1668</name>
</gene>
<comment type="cofactor">
    <cofactor evidence="1">
        <name>Zn(2+)</name>
        <dbReference type="ChEBI" id="CHEBI:29105"/>
    </cofactor>
    <text evidence="1">Binds 1 zinc ion per subunit.</text>
</comment>
<comment type="subunit">
    <text>Part of the 50S ribosomal subunit.</text>
</comment>
<comment type="mass spectrometry"/>
<comment type="similarity">
    <text evidence="3">Belongs to the bacterial ribosomal protein bL36 family.</text>
</comment>
<feature type="chain" id="PRO_0000126284" description="Large ribosomal subunit protein bL36">
    <location>
        <begin position="1"/>
        <end position="37"/>
    </location>
</feature>
<feature type="binding site" evidence="1">
    <location>
        <position position="11"/>
    </location>
    <ligand>
        <name>Zn(2+)</name>
        <dbReference type="ChEBI" id="CHEBI:29105"/>
    </ligand>
</feature>
<feature type="binding site" evidence="1">
    <location>
        <position position="14"/>
    </location>
    <ligand>
        <name>Zn(2+)</name>
        <dbReference type="ChEBI" id="CHEBI:29105"/>
    </ligand>
</feature>
<feature type="binding site" evidence="1">
    <location>
        <position position="27"/>
    </location>
    <ligand>
        <name>Zn(2+)</name>
        <dbReference type="ChEBI" id="CHEBI:29105"/>
    </ligand>
</feature>
<feature type="binding site" evidence="1">
    <location>
        <position position="32"/>
    </location>
    <ligand>
        <name>Zn(2+)</name>
        <dbReference type="ChEBI" id="CHEBI:29105"/>
    </ligand>
</feature>
<feature type="strand" evidence="4">
    <location>
        <begin position="3"/>
        <end position="6"/>
    </location>
</feature>
<feature type="strand" evidence="4">
    <location>
        <begin position="11"/>
        <end position="13"/>
    </location>
</feature>
<feature type="strand" evidence="4">
    <location>
        <begin position="16"/>
        <end position="19"/>
    </location>
</feature>
<feature type="strand" evidence="4">
    <location>
        <begin position="22"/>
        <end position="25"/>
    </location>
</feature>
<feature type="helix" evidence="4">
    <location>
        <begin position="30"/>
        <end position="32"/>
    </location>
</feature>
<feature type="strand" evidence="4">
    <location>
        <begin position="34"/>
        <end position="36"/>
    </location>
</feature>
<keyword id="KW-0002">3D-structure</keyword>
<keyword id="KW-0903">Direct protein sequencing</keyword>
<keyword id="KW-0479">Metal-binding</keyword>
<keyword id="KW-1185">Reference proteome</keyword>
<keyword id="KW-0687">Ribonucleoprotein</keyword>
<keyword id="KW-0689">Ribosomal protein</keyword>
<keyword id="KW-0862">Zinc</keyword>
<evidence type="ECO:0000250" key="1">
    <source>
        <dbReference type="UniProtKB" id="P80256"/>
    </source>
</evidence>
<evidence type="ECO:0000269" key="2">
    <source>
    </source>
</evidence>
<evidence type="ECO:0000305" key="3"/>
<evidence type="ECO:0007829" key="4">
    <source>
        <dbReference type="PDB" id="4WT8"/>
    </source>
</evidence>